<proteinExistence type="inferred from homology"/>
<accession>Q1BRW4</accession>
<organism>
    <name type="scientific">Burkholderia orbicola (strain AU 1054)</name>
    <dbReference type="NCBI Taxonomy" id="331271"/>
    <lineage>
        <taxon>Bacteria</taxon>
        <taxon>Pseudomonadati</taxon>
        <taxon>Pseudomonadota</taxon>
        <taxon>Betaproteobacteria</taxon>
        <taxon>Burkholderiales</taxon>
        <taxon>Burkholderiaceae</taxon>
        <taxon>Burkholderia</taxon>
        <taxon>Burkholderia cepacia complex</taxon>
        <taxon>Burkholderia orbicola</taxon>
    </lineage>
</organism>
<comment type="function">
    <text evidence="1">This is one of the proteins that bind and probably mediate the attachment of the 5S RNA into the large ribosomal subunit, where it forms part of the central protuberance.</text>
</comment>
<comment type="subunit">
    <text evidence="1">Part of the 50S ribosomal subunit; part of the 5S rRNA/L5/L18/L25 subcomplex. Contacts the 5S and 23S rRNAs.</text>
</comment>
<comment type="similarity">
    <text evidence="1">Belongs to the universal ribosomal protein uL18 family.</text>
</comment>
<dbReference type="EMBL" id="CP000378">
    <property type="protein sequence ID" value="ABF77641.1"/>
    <property type="molecule type" value="Genomic_DNA"/>
</dbReference>
<dbReference type="SMR" id="Q1BRW4"/>
<dbReference type="HOGENOM" id="CLU_098841_0_1_4"/>
<dbReference type="GO" id="GO:0022625">
    <property type="term" value="C:cytosolic large ribosomal subunit"/>
    <property type="evidence" value="ECO:0007669"/>
    <property type="project" value="TreeGrafter"/>
</dbReference>
<dbReference type="GO" id="GO:0008097">
    <property type="term" value="F:5S rRNA binding"/>
    <property type="evidence" value="ECO:0007669"/>
    <property type="project" value="TreeGrafter"/>
</dbReference>
<dbReference type="GO" id="GO:0003735">
    <property type="term" value="F:structural constituent of ribosome"/>
    <property type="evidence" value="ECO:0007669"/>
    <property type="project" value="InterPro"/>
</dbReference>
<dbReference type="GO" id="GO:0006412">
    <property type="term" value="P:translation"/>
    <property type="evidence" value="ECO:0007669"/>
    <property type="project" value="UniProtKB-UniRule"/>
</dbReference>
<dbReference type="CDD" id="cd00432">
    <property type="entry name" value="Ribosomal_L18_L5e"/>
    <property type="match status" value="1"/>
</dbReference>
<dbReference type="FunFam" id="3.30.420.100:FF:000001">
    <property type="entry name" value="50S ribosomal protein L18"/>
    <property type="match status" value="1"/>
</dbReference>
<dbReference type="Gene3D" id="3.30.420.100">
    <property type="match status" value="1"/>
</dbReference>
<dbReference type="HAMAP" id="MF_01337_B">
    <property type="entry name" value="Ribosomal_uL18_B"/>
    <property type="match status" value="1"/>
</dbReference>
<dbReference type="InterPro" id="IPR004389">
    <property type="entry name" value="Ribosomal_uL18_bac-type"/>
</dbReference>
<dbReference type="InterPro" id="IPR005484">
    <property type="entry name" value="Ribosomal_uL18_bac/euk"/>
</dbReference>
<dbReference type="NCBIfam" id="TIGR00060">
    <property type="entry name" value="L18_bact"/>
    <property type="match status" value="1"/>
</dbReference>
<dbReference type="PANTHER" id="PTHR12899">
    <property type="entry name" value="39S RIBOSOMAL PROTEIN L18, MITOCHONDRIAL"/>
    <property type="match status" value="1"/>
</dbReference>
<dbReference type="PANTHER" id="PTHR12899:SF3">
    <property type="entry name" value="LARGE RIBOSOMAL SUBUNIT PROTEIN UL18M"/>
    <property type="match status" value="1"/>
</dbReference>
<dbReference type="Pfam" id="PF00861">
    <property type="entry name" value="Ribosomal_L18p"/>
    <property type="match status" value="1"/>
</dbReference>
<dbReference type="SUPFAM" id="SSF53137">
    <property type="entry name" value="Translational machinery components"/>
    <property type="match status" value="1"/>
</dbReference>
<gene>
    <name evidence="1" type="primary">rplR</name>
    <name type="ordered locus">Bcen_2743</name>
</gene>
<evidence type="ECO:0000255" key="1">
    <source>
        <dbReference type="HAMAP-Rule" id="MF_01337"/>
    </source>
</evidence>
<evidence type="ECO:0000305" key="2"/>
<name>RL18_BURO1</name>
<feature type="chain" id="PRO_0000251292" description="Large ribosomal subunit protein uL18">
    <location>
        <begin position="1"/>
        <end position="121"/>
    </location>
</feature>
<reference key="1">
    <citation type="submission" date="2006-05" db="EMBL/GenBank/DDBJ databases">
        <title>Complete sequence of chromosome 1 of Burkholderia cenocepacia AU 1054.</title>
        <authorList>
            <consortium name="US DOE Joint Genome Institute"/>
            <person name="Copeland A."/>
            <person name="Lucas S."/>
            <person name="Lapidus A."/>
            <person name="Barry K."/>
            <person name="Detter J.C."/>
            <person name="Glavina del Rio T."/>
            <person name="Hammon N."/>
            <person name="Israni S."/>
            <person name="Dalin E."/>
            <person name="Tice H."/>
            <person name="Pitluck S."/>
            <person name="Chain P."/>
            <person name="Malfatti S."/>
            <person name="Shin M."/>
            <person name="Vergez L."/>
            <person name="Schmutz J."/>
            <person name="Larimer F."/>
            <person name="Land M."/>
            <person name="Hauser L."/>
            <person name="Kyrpides N."/>
            <person name="Lykidis A."/>
            <person name="LiPuma J.J."/>
            <person name="Konstantinidis K."/>
            <person name="Tiedje J.M."/>
            <person name="Richardson P."/>
        </authorList>
    </citation>
    <scope>NUCLEOTIDE SEQUENCE [LARGE SCALE GENOMIC DNA]</scope>
    <source>
        <strain>AU 1054</strain>
    </source>
</reference>
<protein>
    <recommendedName>
        <fullName evidence="1">Large ribosomal subunit protein uL18</fullName>
    </recommendedName>
    <alternativeName>
        <fullName evidence="2">50S ribosomal protein L18</fullName>
    </alternativeName>
</protein>
<keyword id="KW-0687">Ribonucleoprotein</keyword>
<keyword id="KW-0689">Ribosomal protein</keyword>
<keyword id="KW-0694">RNA-binding</keyword>
<keyword id="KW-0699">rRNA-binding</keyword>
<sequence length="121" mass="13106">MDKTQSRLRRARQTRIKIAELQVARLAVHRTNTHIYAQVFSPCGTKVLASASTLEAEVRAELADKSGKGGNVNAATLIGKRIAEKAKAAGIESVAFDRSGFRYHGRVKALAEAAREAGLKF</sequence>